<protein>
    <recommendedName>
        <fullName>Interleukin-4</fullName>
        <shortName>IL-4</shortName>
    </recommendedName>
    <alternativeName>
        <fullName>B-cell stimulatory factor 1</fullName>
        <shortName>BSF-1</shortName>
    </alternativeName>
    <alternativeName>
        <fullName>Lymphocyte stimulatory factor 1</fullName>
    </alternativeName>
</protein>
<name>IL4_TURTR</name>
<proteinExistence type="evidence at transcript level"/>
<comment type="function">
    <text evidence="2">Participates in at least several B-cell activation processes as well as of other cell types. It is a costimulator of DNA-synthesis. It induces the expression of class II MHC molecules on resting B-cells. It enhances both secretion and cell surface expression of IgE and IgG1. It also regulates the expression of the low affinity Fc receptor for IgE (CD23) on both lymphocytes and monocytes. Positively regulates IL31RA expression in macrophages. Stimulates autophagy in dendritic cells by interfering with mTORC1 signaling and through the induction of RUFY4.</text>
</comment>
<comment type="subcellular location">
    <subcellularLocation>
        <location>Secreted</location>
    </subcellularLocation>
</comment>
<comment type="similarity">
    <text evidence="4">Belongs to the IL-4/IL-13 family.</text>
</comment>
<reference key="1">
    <citation type="journal article" date="1999" name="J. Vet. Med. Sci.">
        <title>Cloning and sequencing of a bottle-nosed dolphin (Tursiops truncatus) interleukin-4-encoding cDNA.</title>
        <authorList>
            <person name="Inoue Y."/>
            <person name="Itou T."/>
            <person name="Sakai T."/>
            <person name="Oike T."/>
        </authorList>
    </citation>
    <scope>NUCLEOTIDE SEQUENCE [MRNA]</scope>
</reference>
<sequence>MGLTSQLIPMLVCLLACTSNFVHGHKCDVTLQEIIKTLNILTAKKNLCMELPVEDVFATTKNTTEKETFCRAGTVLRHIYRHHKCFNQPLSGLHRNLSSMANMTCSVNEAKKSTLKDFLERLKMIMKEKYSKC</sequence>
<accession>Q9XS58</accession>
<evidence type="ECO:0000250" key="1"/>
<evidence type="ECO:0000250" key="2">
    <source>
        <dbReference type="UniProtKB" id="P07750"/>
    </source>
</evidence>
<evidence type="ECO:0000255" key="3"/>
<evidence type="ECO:0000305" key="4"/>
<feature type="signal peptide" evidence="1">
    <location>
        <begin position="1"/>
        <end position="24"/>
    </location>
</feature>
<feature type="chain" id="PRO_0000015544" description="Interleukin-4">
    <location>
        <begin position="25"/>
        <end position="133"/>
    </location>
</feature>
<feature type="glycosylation site" description="N-linked (GlcNAc...) asparagine" evidence="3">
    <location>
        <position position="62"/>
    </location>
</feature>
<feature type="glycosylation site" description="N-linked (GlcNAc...) asparagine" evidence="3">
    <location>
        <position position="96"/>
    </location>
</feature>
<feature type="glycosylation site" description="N-linked (GlcNAc...) asparagine" evidence="3">
    <location>
        <position position="102"/>
    </location>
</feature>
<feature type="disulfide bond" evidence="1">
    <location>
        <begin position="27"/>
        <end position="133"/>
    </location>
</feature>
<feature type="disulfide bond" evidence="1">
    <location>
        <begin position="48"/>
        <end position="85"/>
    </location>
</feature>
<feature type="disulfide bond" evidence="1">
    <location>
        <begin position="70"/>
        <end position="105"/>
    </location>
</feature>
<dbReference type="EMBL" id="AB020732">
    <property type="protein sequence ID" value="BAA78610.1"/>
    <property type="molecule type" value="mRNA"/>
</dbReference>
<dbReference type="RefSeq" id="NP_001267586.1">
    <property type="nucleotide sequence ID" value="NM_001280657.1"/>
</dbReference>
<dbReference type="SMR" id="Q9XS58"/>
<dbReference type="FunCoup" id="Q9XS58">
    <property type="interactions" value="704"/>
</dbReference>
<dbReference type="STRING" id="9739.ENSTTRP00000002440"/>
<dbReference type="GlyCosmos" id="Q9XS58">
    <property type="glycosylation" value="3 sites, No reported glycans"/>
</dbReference>
<dbReference type="GeneID" id="101338293"/>
<dbReference type="CTD" id="3565"/>
<dbReference type="HOGENOM" id="CLU_154691_0_0_1"/>
<dbReference type="InParanoid" id="Q9XS58"/>
<dbReference type="OrthoDB" id="9528087at2759"/>
<dbReference type="Proteomes" id="UP000245320">
    <property type="component" value="Chromosome 3"/>
</dbReference>
<dbReference type="GO" id="GO:0005615">
    <property type="term" value="C:extracellular space"/>
    <property type="evidence" value="ECO:0007669"/>
    <property type="project" value="UniProtKB-KW"/>
</dbReference>
<dbReference type="GO" id="GO:0005125">
    <property type="term" value="F:cytokine activity"/>
    <property type="evidence" value="ECO:0007669"/>
    <property type="project" value="UniProtKB-KW"/>
</dbReference>
<dbReference type="GO" id="GO:0008083">
    <property type="term" value="F:growth factor activity"/>
    <property type="evidence" value="ECO:0007669"/>
    <property type="project" value="UniProtKB-KW"/>
</dbReference>
<dbReference type="GO" id="GO:0005136">
    <property type="term" value="F:interleukin-4 receptor binding"/>
    <property type="evidence" value="ECO:0007669"/>
    <property type="project" value="InterPro"/>
</dbReference>
<dbReference type="GO" id="GO:0042113">
    <property type="term" value="P:B cell activation"/>
    <property type="evidence" value="ECO:0007669"/>
    <property type="project" value="UniProtKB-KW"/>
</dbReference>
<dbReference type="GO" id="GO:0006955">
    <property type="term" value="P:immune response"/>
    <property type="evidence" value="ECO:0007669"/>
    <property type="project" value="InterPro"/>
</dbReference>
<dbReference type="GO" id="GO:0035771">
    <property type="term" value="P:interleukin-4-mediated signaling pathway"/>
    <property type="evidence" value="ECO:0007669"/>
    <property type="project" value="TreeGrafter"/>
</dbReference>
<dbReference type="GO" id="GO:0050728">
    <property type="term" value="P:negative regulation of inflammatory response"/>
    <property type="evidence" value="ECO:0007669"/>
    <property type="project" value="TreeGrafter"/>
</dbReference>
<dbReference type="GO" id="GO:0045893">
    <property type="term" value="P:positive regulation of DNA-templated transcription"/>
    <property type="evidence" value="ECO:0007669"/>
    <property type="project" value="TreeGrafter"/>
</dbReference>
<dbReference type="GO" id="GO:0016239">
    <property type="term" value="P:positive regulation of macroautophagy"/>
    <property type="evidence" value="ECO:0000250"/>
    <property type="project" value="UniProtKB"/>
</dbReference>
<dbReference type="GO" id="GO:0050776">
    <property type="term" value="P:regulation of immune response"/>
    <property type="evidence" value="ECO:0007669"/>
    <property type="project" value="TreeGrafter"/>
</dbReference>
<dbReference type="FunFam" id="1.20.1250.10:FF:000014">
    <property type="entry name" value="Interleukin-4"/>
    <property type="match status" value="1"/>
</dbReference>
<dbReference type="Gene3D" id="1.20.1250.10">
    <property type="match status" value="1"/>
</dbReference>
<dbReference type="InterPro" id="IPR009079">
    <property type="entry name" value="4_helix_cytokine-like_core"/>
</dbReference>
<dbReference type="InterPro" id="IPR002354">
    <property type="entry name" value="IL-4"/>
</dbReference>
<dbReference type="InterPro" id="IPR001325">
    <property type="entry name" value="IL-4/IL-13"/>
</dbReference>
<dbReference type="InterPro" id="IPR018096">
    <property type="entry name" value="IL-4/IL-13_CS"/>
</dbReference>
<dbReference type="PANTHER" id="PTHR47401">
    <property type="entry name" value="INTERLEUKIN-4"/>
    <property type="match status" value="1"/>
</dbReference>
<dbReference type="PANTHER" id="PTHR47401:SF1">
    <property type="entry name" value="INTERLEUKIN-4"/>
    <property type="match status" value="1"/>
</dbReference>
<dbReference type="Pfam" id="PF00727">
    <property type="entry name" value="IL4"/>
    <property type="match status" value="1"/>
</dbReference>
<dbReference type="PIRSF" id="PIRSF001941">
    <property type="entry name" value="Interleukin_4"/>
    <property type="match status" value="1"/>
</dbReference>
<dbReference type="PRINTS" id="PR00431">
    <property type="entry name" value="INTERLEUKIN4"/>
</dbReference>
<dbReference type="SMART" id="SM00190">
    <property type="entry name" value="IL4_13"/>
    <property type="match status" value="1"/>
</dbReference>
<dbReference type="SUPFAM" id="SSF47266">
    <property type="entry name" value="4-helical cytokines"/>
    <property type="match status" value="1"/>
</dbReference>
<dbReference type="PROSITE" id="PS00838">
    <property type="entry name" value="INTERLEUKIN_4_13"/>
    <property type="match status" value="1"/>
</dbReference>
<gene>
    <name type="primary">IL4</name>
</gene>
<keyword id="KW-0075">B-cell activation</keyword>
<keyword id="KW-0202">Cytokine</keyword>
<keyword id="KW-1015">Disulfide bond</keyword>
<keyword id="KW-0325">Glycoprotein</keyword>
<keyword id="KW-0339">Growth factor</keyword>
<keyword id="KW-1185">Reference proteome</keyword>
<keyword id="KW-0964">Secreted</keyword>
<keyword id="KW-0732">Signal</keyword>
<organism>
    <name type="scientific">Tursiops truncatus</name>
    <name type="common">Atlantic bottle-nosed dolphin</name>
    <name type="synonym">Delphinus truncatus</name>
    <dbReference type="NCBI Taxonomy" id="9739"/>
    <lineage>
        <taxon>Eukaryota</taxon>
        <taxon>Metazoa</taxon>
        <taxon>Chordata</taxon>
        <taxon>Craniata</taxon>
        <taxon>Vertebrata</taxon>
        <taxon>Euteleostomi</taxon>
        <taxon>Mammalia</taxon>
        <taxon>Eutheria</taxon>
        <taxon>Laurasiatheria</taxon>
        <taxon>Artiodactyla</taxon>
        <taxon>Whippomorpha</taxon>
        <taxon>Cetacea</taxon>
        <taxon>Odontoceti</taxon>
        <taxon>Delphinidae</taxon>
        <taxon>Tursiops</taxon>
    </lineage>
</organism>